<comment type="function">
    <text>Cytochromes P450 are a group of heme-thiolate monooxygenases. In liver microsomes, this enzyme is involved in an NADPH-dependent electron transport pathway. It oxidizes a variety of structurally unrelated compounds, including steroids, fatty acids, and xenobiotics.</text>
</comment>
<comment type="catalytic activity">
    <reaction>
        <text>an organic molecule + reduced [NADPH--hemoprotein reductase] + O2 = an alcohol + oxidized [NADPH--hemoprotein reductase] + H2O + H(+)</text>
        <dbReference type="Rhea" id="RHEA:17149"/>
        <dbReference type="Rhea" id="RHEA-COMP:11964"/>
        <dbReference type="Rhea" id="RHEA-COMP:11965"/>
        <dbReference type="ChEBI" id="CHEBI:15377"/>
        <dbReference type="ChEBI" id="CHEBI:15378"/>
        <dbReference type="ChEBI" id="CHEBI:15379"/>
        <dbReference type="ChEBI" id="CHEBI:30879"/>
        <dbReference type="ChEBI" id="CHEBI:57618"/>
        <dbReference type="ChEBI" id="CHEBI:58210"/>
        <dbReference type="ChEBI" id="CHEBI:142491"/>
        <dbReference type="EC" id="1.14.14.1"/>
    </reaction>
</comment>
<comment type="cofactor">
    <cofactor evidence="1">
        <name>heme</name>
        <dbReference type="ChEBI" id="CHEBI:30413"/>
    </cofactor>
</comment>
<comment type="subcellular location">
    <subcellularLocation>
        <location>Endoplasmic reticulum membrane</location>
        <topology>Peripheral membrane protein</topology>
    </subcellularLocation>
    <subcellularLocation>
        <location>Microsome membrane</location>
        <topology>Peripheral membrane protein</topology>
    </subcellularLocation>
</comment>
<comment type="induction">
    <text>P450 can be induced to high levels in liver and other tissues by various foreign compounds, including drugs, pesticides, and carcinogens.</text>
</comment>
<comment type="similarity">
    <text evidence="3">Belongs to the cytochrome P450 family.</text>
</comment>
<organism>
    <name type="scientific">Homo sapiens</name>
    <name type="common">Human</name>
    <dbReference type="NCBI Taxonomy" id="9606"/>
    <lineage>
        <taxon>Eukaryota</taxon>
        <taxon>Metazoa</taxon>
        <taxon>Chordata</taxon>
        <taxon>Craniata</taxon>
        <taxon>Vertebrata</taxon>
        <taxon>Euteleostomi</taxon>
        <taxon>Mammalia</taxon>
        <taxon>Eutheria</taxon>
        <taxon>Euarchontoglires</taxon>
        <taxon>Primates</taxon>
        <taxon>Haplorrhini</taxon>
        <taxon>Catarrhini</taxon>
        <taxon>Hominidae</taxon>
        <taxon>Homo</taxon>
    </lineage>
</organism>
<evidence type="ECO:0000250" key="1"/>
<evidence type="ECO:0000269" key="2">
    <source>
    </source>
</evidence>
<evidence type="ECO:0000305" key="3"/>
<accession>P20853</accession>
<accession>Q13121</accession>
<feature type="chain" id="PRO_0000051669" description="Cytochrome P450 2A7">
    <location>
        <begin position="1"/>
        <end position="494"/>
    </location>
</feature>
<feature type="binding site" description="axial binding residue" evidence="1">
    <location>
        <position position="439"/>
    </location>
    <ligand>
        <name>heme</name>
        <dbReference type="ChEBI" id="CHEBI:30413"/>
    </ligand>
    <ligandPart>
        <name>Fe</name>
        <dbReference type="ChEBI" id="CHEBI:18248"/>
    </ligandPart>
</feature>
<feature type="sequence variant" id="VAR_047815" description="In dbSNP:rs10425176.">
    <original>F</original>
    <variation>I</variation>
    <location>
        <position position="61"/>
    </location>
</feature>
<feature type="sequence variant" id="VAR_047816" description="In dbSNP:rs10425169.">
    <original>C</original>
    <variation>R</variation>
    <location>
        <position position="64"/>
    </location>
</feature>
<feature type="sequence variant" id="VAR_061043" description="In dbSNP:rs4142867.">
    <original>D</original>
    <variation>E</variation>
    <location>
        <position position="169"/>
    </location>
</feature>
<feature type="sequence variant" id="VAR_047817" description="In dbSNP:rs4079366.">
    <original>H</original>
    <variation>R</variation>
    <location>
        <position position="274"/>
    </location>
</feature>
<feature type="sequence variant" id="VAR_047818" description="In dbSNP:rs2545754.">
    <original>A</original>
    <variation>G</variation>
    <location>
        <position position="301"/>
    </location>
</feature>
<feature type="sequence variant" id="VAR_047819" description="In dbSNP:rs3869579.">
    <original>R</original>
    <variation>C</variation>
    <location>
        <position position="311"/>
    </location>
</feature>
<feature type="sequence variant" id="VAR_047820" description="In dbSNP:rs2261144.">
    <original>M</original>
    <variation>T</variation>
    <location>
        <position position="368"/>
    </location>
</feature>
<feature type="sequence variant" id="VAR_061044" description="In dbSNP:rs12460590." evidence="2">
    <original>V</original>
    <variation>G</variation>
    <location>
        <position position="479"/>
    </location>
</feature>
<feature type="sequence conflict" description="In Ref. 2; AAB40520." evidence="3" ref="2">
    <original>D</original>
    <variation>E</variation>
    <location>
        <position position="108"/>
    </location>
</feature>
<feature type="sequence conflict" description="In Ref. 1; AAA52138." evidence="3" ref="1">
    <original>T</original>
    <variation>S</variation>
    <location>
        <position position="163"/>
    </location>
</feature>
<feature type="sequence conflict" description="In Ref. 2; AAB40520." evidence="3" ref="2">
    <original>V</original>
    <variation>L</variation>
    <location>
        <position position="226"/>
    </location>
</feature>
<feature type="sequence conflict" description="In Ref. 2; AAB40520." evidence="3" ref="2">
    <original>Q</original>
    <variation>L</variation>
    <location>
        <position position="242"/>
    </location>
</feature>
<feature type="sequence conflict" description="In Ref. 2; AAB40520." evidence="3" ref="2">
    <original>PS</original>
    <variation>LR</variation>
    <location>
        <begin position="402"/>
        <end position="403"/>
    </location>
</feature>
<feature type="sequence conflict" description="In Ref. 2; AAB40520." evidence="3" ref="2">
    <original>Q</original>
    <variation>R</variation>
    <location>
        <position position="409"/>
    </location>
</feature>
<feature type="sequence conflict" description="In Ref. 2; AAB40520." evidence="3" ref="2">
    <original>DD</original>
    <variation>GE</variation>
    <location>
        <begin position="418"/>
        <end position="419"/>
    </location>
</feature>
<feature type="sequence conflict" description="In Ref. 2; AAB40520." evidence="3" ref="2">
    <original>S</original>
    <variation>R</variation>
    <location>
        <position position="426"/>
    </location>
</feature>
<feature type="sequence conflict" description="In Ref. 2; AAB40520." evidence="3" ref="2">
    <original>G</original>
    <variation>R</variation>
    <location>
        <position position="435"/>
    </location>
</feature>
<feature type="sequence conflict" description="In Ref. 1; AAA52138." evidence="3" ref="1">
    <original>N</original>
    <variation>Y</variation>
    <location>
        <position position="438"/>
    </location>
</feature>
<feature type="sequence conflict" description="In Ref. 1; AAA52138." evidence="3" ref="1">
    <original>P</original>
    <variation>S</variation>
    <location>
        <position position="475"/>
    </location>
</feature>
<name>CP2A7_HUMAN</name>
<reference key="1">
    <citation type="journal article" date="1990" name="Biochemistry">
        <title>The CYP2A3 gene product catalyzes coumarin 7-hydroxylation in human liver microsomes.</title>
        <authorList>
            <person name="Yamano S."/>
            <person name="Tatsuno J."/>
            <person name="Gonzalez F.J."/>
        </authorList>
    </citation>
    <scope>NUCLEOTIDE SEQUENCE [MRNA]</scope>
    <scope>VARIANT GLY-479</scope>
    <source>
        <tissue>Liver</tissue>
    </source>
</reference>
<reference key="2">
    <citation type="journal article" date="1995" name="Am. J. Hum. Genet.">
        <title>A genetic polymorphism in coumarin 7-hydroxylation: sequence of the human CYP2A genes and identification of variant CYP2A6 alleles.</title>
        <authorList>
            <person name="Fernandez-Salguero P."/>
            <person name="Hoffman S.M."/>
            <person name="Cholerton S."/>
            <person name="Mohrenweiser H."/>
            <person name="Raunio H."/>
            <person name="Rautio A."/>
            <person name="Pelkonen O."/>
            <person name="Huang J.D."/>
            <person name="Evans W.E."/>
            <person name="Idle J.R."/>
        </authorList>
    </citation>
    <scope>NUCLEOTIDE SEQUENCE [MRNA]</scope>
</reference>
<reference key="3">
    <citation type="journal article" date="2004" name="Nature">
        <title>The DNA sequence and biology of human chromosome 19.</title>
        <authorList>
            <person name="Grimwood J."/>
            <person name="Gordon L.A."/>
            <person name="Olsen A.S."/>
            <person name="Terry A."/>
            <person name="Schmutz J."/>
            <person name="Lamerdin J.E."/>
            <person name="Hellsten U."/>
            <person name="Goodstein D."/>
            <person name="Couronne O."/>
            <person name="Tran-Gyamfi M."/>
            <person name="Aerts A."/>
            <person name="Altherr M."/>
            <person name="Ashworth L."/>
            <person name="Bajorek E."/>
            <person name="Black S."/>
            <person name="Branscomb E."/>
            <person name="Caenepeel S."/>
            <person name="Carrano A.V."/>
            <person name="Caoile C."/>
            <person name="Chan Y.M."/>
            <person name="Christensen M."/>
            <person name="Cleland C.A."/>
            <person name="Copeland A."/>
            <person name="Dalin E."/>
            <person name="Dehal P."/>
            <person name="Denys M."/>
            <person name="Detter J.C."/>
            <person name="Escobar J."/>
            <person name="Flowers D."/>
            <person name="Fotopulos D."/>
            <person name="Garcia C."/>
            <person name="Georgescu A.M."/>
            <person name="Glavina T."/>
            <person name="Gomez M."/>
            <person name="Gonzales E."/>
            <person name="Groza M."/>
            <person name="Hammon N."/>
            <person name="Hawkins T."/>
            <person name="Haydu L."/>
            <person name="Ho I."/>
            <person name="Huang W."/>
            <person name="Israni S."/>
            <person name="Jett J."/>
            <person name="Kadner K."/>
            <person name="Kimball H."/>
            <person name="Kobayashi A."/>
            <person name="Larionov V."/>
            <person name="Leem S.-H."/>
            <person name="Lopez F."/>
            <person name="Lou Y."/>
            <person name="Lowry S."/>
            <person name="Malfatti S."/>
            <person name="Martinez D."/>
            <person name="McCready P.M."/>
            <person name="Medina C."/>
            <person name="Morgan J."/>
            <person name="Nelson K."/>
            <person name="Nolan M."/>
            <person name="Ovcharenko I."/>
            <person name="Pitluck S."/>
            <person name="Pollard M."/>
            <person name="Popkie A.P."/>
            <person name="Predki P."/>
            <person name="Quan G."/>
            <person name="Ramirez L."/>
            <person name="Rash S."/>
            <person name="Retterer J."/>
            <person name="Rodriguez A."/>
            <person name="Rogers S."/>
            <person name="Salamov A."/>
            <person name="Salazar A."/>
            <person name="She X."/>
            <person name="Smith D."/>
            <person name="Slezak T."/>
            <person name="Solovyev V."/>
            <person name="Thayer N."/>
            <person name="Tice H."/>
            <person name="Tsai M."/>
            <person name="Ustaszewska A."/>
            <person name="Vo N."/>
            <person name="Wagner M."/>
            <person name="Wheeler J."/>
            <person name="Wu K."/>
            <person name="Xie G."/>
            <person name="Yang J."/>
            <person name="Dubchak I."/>
            <person name="Furey T.S."/>
            <person name="DeJong P."/>
            <person name="Dickson M."/>
            <person name="Gordon D."/>
            <person name="Eichler E.E."/>
            <person name="Pennacchio L.A."/>
            <person name="Richardson P."/>
            <person name="Stubbs L."/>
            <person name="Rokhsar D.S."/>
            <person name="Myers R.M."/>
            <person name="Rubin E.M."/>
            <person name="Lucas S.M."/>
        </authorList>
    </citation>
    <scope>NUCLEOTIDE SEQUENCE [LARGE SCALE GENOMIC DNA]</scope>
</reference>
<gene>
    <name type="primary">CYP2A7</name>
</gene>
<proteinExistence type="evidence at protein level"/>
<dbReference type="EC" id="1.14.14.1"/>
<dbReference type="EMBL" id="M33317">
    <property type="protein sequence ID" value="AAA52138.1"/>
    <property type="molecule type" value="mRNA"/>
</dbReference>
<dbReference type="EMBL" id="U22029">
    <property type="protein sequence ID" value="AAB40520.1"/>
    <property type="molecule type" value="mRNA"/>
</dbReference>
<dbReference type="EMBL" id="AC008537">
    <property type="status" value="NOT_ANNOTATED_CDS"/>
    <property type="molecule type" value="Genomic_DNA"/>
</dbReference>
<dbReference type="CCDS" id="CCDS12569.1"/>
<dbReference type="PIR" id="C34271">
    <property type="entry name" value="C34271"/>
</dbReference>
<dbReference type="PIR" id="I38967">
    <property type="entry name" value="I38967"/>
</dbReference>
<dbReference type="RefSeq" id="NP_000755.2">
    <property type="nucleotide sequence ID" value="NM_000764.2"/>
</dbReference>
<dbReference type="RefSeq" id="NP_085079.2">
    <property type="nucleotide sequence ID" value="NM_030589.2"/>
</dbReference>
<dbReference type="SMR" id="P20853"/>
<dbReference type="BioGRID" id="107928">
    <property type="interactions" value="16"/>
</dbReference>
<dbReference type="FunCoup" id="P20853">
    <property type="interactions" value="240"/>
</dbReference>
<dbReference type="IntAct" id="P20853">
    <property type="interactions" value="2"/>
</dbReference>
<dbReference type="STRING" id="9606.ENSP00000301146"/>
<dbReference type="BindingDB" id="P20853"/>
<dbReference type="ChEMBL" id="CHEMBL4523986"/>
<dbReference type="GlyGen" id="P20853">
    <property type="glycosylation" value="1 site"/>
</dbReference>
<dbReference type="iPTMnet" id="P20853"/>
<dbReference type="PhosphoSitePlus" id="P20853"/>
<dbReference type="BioMuta" id="CYP2A7"/>
<dbReference type="DMDM" id="215273959"/>
<dbReference type="jPOST" id="P20853"/>
<dbReference type="MassIVE" id="P20853"/>
<dbReference type="PaxDb" id="9606-ENSP00000301146"/>
<dbReference type="PeptideAtlas" id="P20853"/>
<dbReference type="TopDownProteomics" id="P20853"/>
<dbReference type="Antibodypedia" id="30661">
    <property type="antibodies" value="197 antibodies from 24 providers"/>
</dbReference>
<dbReference type="DNASU" id="1549"/>
<dbReference type="Ensembl" id="ENST00000301146.9">
    <property type="protein sequence ID" value="ENSP00000301146.4"/>
    <property type="gene ID" value="ENSG00000198077.11"/>
</dbReference>
<dbReference type="GeneID" id="1549"/>
<dbReference type="KEGG" id="hsa:1549"/>
<dbReference type="MANE-Select" id="ENST00000301146.9">
    <property type="protein sequence ID" value="ENSP00000301146.4"/>
    <property type="RefSeq nucleotide sequence ID" value="NM_000764.3"/>
    <property type="RefSeq protein sequence ID" value="NP_000755.2"/>
</dbReference>
<dbReference type="UCSC" id="uc002opm.3">
    <property type="organism name" value="human"/>
</dbReference>
<dbReference type="AGR" id="HGNC:2611"/>
<dbReference type="CTD" id="1549"/>
<dbReference type="DisGeNET" id="1549"/>
<dbReference type="GeneCards" id="CYP2A7"/>
<dbReference type="HGNC" id="HGNC:2611">
    <property type="gene designation" value="CYP2A7"/>
</dbReference>
<dbReference type="HPA" id="ENSG00000198077">
    <property type="expression patterns" value="Tissue enriched (liver)"/>
</dbReference>
<dbReference type="MIM" id="608054">
    <property type="type" value="gene"/>
</dbReference>
<dbReference type="neXtProt" id="NX_P20853"/>
<dbReference type="OpenTargets" id="ENSG00000198077"/>
<dbReference type="PharmGKB" id="PA27102"/>
<dbReference type="VEuPathDB" id="HostDB:ENSG00000198077"/>
<dbReference type="eggNOG" id="KOG0156">
    <property type="taxonomic scope" value="Eukaryota"/>
</dbReference>
<dbReference type="GeneTree" id="ENSGT00940000154117"/>
<dbReference type="HOGENOM" id="CLU_001570_22_3_1"/>
<dbReference type="InParanoid" id="P20853"/>
<dbReference type="OMA" id="RYVMSSM"/>
<dbReference type="OrthoDB" id="2789670at2759"/>
<dbReference type="PAN-GO" id="P20853">
    <property type="GO annotations" value="9 GO annotations based on evolutionary models"/>
</dbReference>
<dbReference type="PhylomeDB" id="P20853"/>
<dbReference type="TreeFam" id="TF352043"/>
<dbReference type="PathwayCommons" id="P20853"/>
<dbReference type="Reactome" id="R-HSA-211935">
    <property type="pathway name" value="Fatty acids"/>
</dbReference>
<dbReference type="Reactome" id="R-HSA-211981">
    <property type="pathway name" value="Xenobiotics"/>
</dbReference>
<dbReference type="Reactome" id="R-HSA-211999">
    <property type="pathway name" value="CYP2E1 reactions"/>
</dbReference>
<dbReference type="SignaLink" id="P20853"/>
<dbReference type="BioGRID-ORCS" id="1549">
    <property type="hits" value="16 hits in 1131 CRISPR screens"/>
</dbReference>
<dbReference type="ChiTaRS" id="CYP2A7">
    <property type="organism name" value="human"/>
</dbReference>
<dbReference type="GeneWiki" id="CYP2A7"/>
<dbReference type="GenomeRNAi" id="1549"/>
<dbReference type="Pharos" id="P20853">
    <property type="development level" value="Tbio"/>
</dbReference>
<dbReference type="PRO" id="PR:P20853"/>
<dbReference type="Proteomes" id="UP000005640">
    <property type="component" value="Chromosome 19"/>
</dbReference>
<dbReference type="RNAct" id="P20853">
    <property type="molecule type" value="protein"/>
</dbReference>
<dbReference type="Bgee" id="ENSG00000198077">
    <property type="expression patterns" value="Expressed in liver and 93 other cell types or tissues"/>
</dbReference>
<dbReference type="ExpressionAtlas" id="P20853">
    <property type="expression patterns" value="baseline and differential"/>
</dbReference>
<dbReference type="GO" id="GO:0005737">
    <property type="term" value="C:cytoplasm"/>
    <property type="evidence" value="ECO:0000318"/>
    <property type="project" value="GO_Central"/>
</dbReference>
<dbReference type="GO" id="GO:0005789">
    <property type="term" value="C:endoplasmic reticulum membrane"/>
    <property type="evidence" value="ECO:0007669"/>
    <property type="project" value="UniProtKB-SubCell"/>
</dbReference>
<dbReference type="GO" id="GO:0043231">
    <property type="term" value="C:intracellular membrane-bounded organelle"/>
    <property type="evidence" value="ECO:0000318"/>
    <property type="project" value="GO_Central"/>
</dbReference>
<dbReference type="GO" id="GO:0008392">
    <property type="term" value="F:arachidonate epoxygenase activity"/>
    <property type="evidence" value="ECO:0000318"/>
    <property type="project" value="GO_Central"/>
</dbReference>
<dbReference type="GO" id="GO:0020037">
    <property type="term" value="F:heme binding"/>
    <property type="evidence" value="ECO:0000318"/>
    <property type="project" value="GO_Central"/>
</dbReference>
<dbReference type="GO" id="GO:0005506">
    <property type="term" value="F:iron ion binding"/>
    <property type="evidence" value="ECO:0007669"/>
    <property type="project" value="InterPro"/>
</dbReference>
<dbReference type="GO" id="GO:0016712">
    <property type="term" value="F:oxidoreductase activity, acting on paired donors, with incorporation or reduction of molecular oxygen, reduced flavin or flavoprotein as one donor, and incorporation of one atom of oxygen"/>
    <property type="evidence" value="ECO:0000318"/>
    <property type="project" value="GO_Central"/>
</dbReference>
<dbReference type="GO" id="GO:0019825">
    <property type="term" value="F:oxygen binding"/>
    <property type="evidence" value="ECO:0000304"/>
    <property type="project" value="ProtInc"/>
</dbReference>
<dbReference type="GO" id="GO:0009804">
    <property type="term" value="P:coumarin metabolic process"/>
    <property type="evidence" value="ECO:0000318"/>
    <property type="project" value="GO_Central"/>
</dbReference>
<dbReference type="GO" id="GO:0019373">
    <property type="term" value="P:epoxygenase P450 pathway"/>
    <property type="evidence" value="ECO:0000318"/>
    <property type="project" value="GO_Central"/>
</dbReference>
<dbReference type="GO" id="GO:0006805">
    <property type="term" value="P:xenobiotic metabolic process"/>
    <property type="evidence" value="ECO:0000318"/>
    <property type="project" value="GO_Central"/>
</dbReference>
<dbReference type="CDD" id="cd20668">
    <property type="entry name" value="CYP2A"/>
    <property type="match status" value="1"/>
</dbReference>
<dbReference type="FunFam" id="1.10.630.10:FF:000238">
    <property type="entry name" value="Cytochrome P450 2A6"/>
    <property type="match status" value="1"/>
</dbReference>
<dbReference type="Gene3D" id="1.10.630.10">
    <property type="entry name" value="Cytochrome P450"/>
    <property type="match status" value="1"/>
</dbReference>
<dbReference type="InterPro" id="IPR001128">
    <property type="entry name" value="Cyt_P450"/>
</dbReference>
<dbReference type="InterPro" id="IPR017972">
    <property type="entry name" value="Cyt_P450_CS"/>
</dbReference>
<dbReference type="InterPro" id="IPR002401">
    <property type="entry name" value="Cyt_P450_E_grp-I"/>
</dbReference>
<dbReference type="InterPro" id="IPR008067">
    <property type="entry name" value="Cyt_P450_E_grp-I_CYP2A-like"/>
</dbReference>
<dbReference type="InterPro" id="IPR036396">
    <property type="entry name" value="Cyt_P450_sf"/>
</dbReference>
<dbReference type="InterPro" id="IPR050182">
    <property type="entry name" value="Cytochrome_P450_fam2"/>
</dbReference>
<dbReference type="PANTHER" id="PTHR24300:SF297">
    <property type="entry name" value="CYTOCHROME P450 2A7"/>
    <property type="match status" value="1"/>
</dbReference>
<dbReference type="PANTHER" id="PTHR24300">
    <property type="entry name" value="CYTOCHROME P450 508A4-RELATED"/>
    <property type="match status" value="1"/>
</dbReference>
<dbReference type="Pfam" id="PF00067">
    <property type="entry name" value="p450"/>
    <property type="match status" value="1"/>
</dbReference>
<dbReference type="PRINTS" id="PR00463">
    <property type="entry name" value="EP450I"/>
</dbReference>
<dbReference type="PRINTS" id="PR01684">
    <property type="entry name" value="EP450ICYP2A"/>
</dbReference>
<dbReference type="PRINTS" id="PR00385">
    <property type="entry name" value="P450"/>
</dbReference>
<dbReference type="SUPFAM" id="SSF48264">
    <property type="entry name" value="Cytochrome P450"/>
    <property type="match status" value="1"/>
</dbReference>
<dbReference type="PROSITE" id="PS00086">
    <property type="entry name" value="CYTOCHROME_P450"/>
    <property type="match status" value="1"/>
</dbReference>
<sequence>MLASGLLLVALLACLTVMVLMSVWQQRKSRGKLPPGPTPLPFIGNYLQLNTEHICDSIMKFSECYGPVFTIHLGPRRVVVLCGHDAVREALVDQAEEFSGRGEQATFDWVFKGYGVAFSNGERAKQLLRFAIATLRDFGVGKRGIEERIQEESGFLIEAIRSTHGANIDPTFFLSRTVSNVISSIVFGDRFDYEDKEFLSLLSMMLGIFQFTSTSTGQLYEMFSSVMKHLPGPQQQAFKLLQGLEDFIAKKVEHNQRTLDPNSPQDFIDSFLIHMQEEEKNPNTEFYLKNLMMSTLNLFIAGTETVSTTLRYGFLLLMKHPEVEAKVHEEIDRVIGKNRQPKFEDRTKMPYMEAVIHEIQRFGDVIPMSLARRVKKDTKFRDFFLPKGTEVFPMLGSVLRDPSFFSNPQDFNPQHFLDDKGQFKKSDAFVPFSIGKRNCFGEGLARMELFLFFTTVMQNFRLKSSQSPKDIDVSPKHVVFATIPRNYTMSFLPR</sequence>
<keyword id="KW-0256">Endoplasmic reticulum</keyword>
<keyword id="KW-0349">Heme</keyword>
<keyword id="KW-0408">Iron</keyword>
<keyword id="KW-0472">Membrane</keyword>
<keyword id="KW-0479">Metal-binding</keyword>
<keyword id="KW-0492">Microsome</keyword>
<keyword id="KW-0503">Monooxygenase</keyword>
<keyword id="KW-0560">Oxidoreductase</keyword>
<keyword id="KW-1267">Proteomics identification</keyword>
<keyword id="KW-1185">Reference proteome</keyword>
<protein>
    <recommendedName>
        <fullName>Cytochrome P450 2A7</fullName>
        <ecNumber>1.14.14.1</ecNumber>
    </recommendedName>
    <alternativeName>
        <fullName>CYPIIA7</fullName>
    </alternativeName>
    <alternativeName>
        <fullName>Cytochrome P450 IIA4</fullName>
    </alternativeName>
</protein>